<evidence type="ECO:0000255" key="1">
    <source>
        <dbReference type="HAMAP-Rule" id="MF_00625"/>
    </source>
</evidence>
<protein>
    <recommendedName>
        <fullName evidence="1">Selenide, water dikinase</fullName>
        <ecNumber evidence="1">2.7.9.3</ecNumber>
    </recommendedName>
    <alternativeName>
        <fullName evidence="1">Selenium donor protein</fullName>
    </alternativeName>
    <alternativeName>
        <fullName evidence="1">Selenophosphate synthase</fullName>
    </alternativeName>
</protein>
<gene>
    <name evidence="1" type="primary">selD</name>
    <name type="ordered locus">EcE24377A_1987</name>
</gene>
<sequence length="347" mass="36703">MSENSIRLTQYSHGAGCGCKISPKVLETILHSEQAKFVDPNLLVGNETRDDAAVYDLGNGTSVISTTDFFMPIVDNPFDFGRIAATNAISDIFAMGGKPIMAIAILGWPINKLSPEIAREVTEGGRYACRQAGIALAGGHSIDAPEPIFGLAVTGIVPTERVKKNSTAQAGCKLFLTKPLGIGVLTTAEKKSLLKPEHQGLATEVMCRMNIAGASFANIEGVKAMTDVTGFGLLGHLSEMCQGAGVQARVDYDAIPKLPGVEEYIKLGAVPGGTERNFASYGHLMGEMPREVRDLLCDPQTSGGLLLAVMPEAENEVKTTAAEFGIELTAIGELVPARGGRAMVEIR</sequence>
<name>SELD_ECO24</name>
<keyword id="KW-0067">ATP-binding</keyword>
<keyword id="KW-0418">Kinase</keyword>
<keyword id="KW-0460">Magnesium</keyword>
<keyword id="KW-0479">Metal-binding</keyword>
<keyword id="KW-0547">Nucleotide-binding</keyword>
<keyword id="KW-1185">Reference proteome</keyword>
<keyword id="KW-0711">Selenium</keyword>
<keyword id="KW-0808">Transferase</keyword>
<feature type="chain" id="PRO_0000318668" description="Selenide, water dikinase">
    <location>
        <begin position="1"/>
        <end position="347"/>
    </location>
</feature>
<feature type="active site" evidence="1">
    <location>
        <position position="17"/>
    </location>
</feature>
<feature type="binding site" description="in other chain" evidence="1">
    <location>
        <position position="20"/>
    </location>
    <ligand>
        <name>ATP</name>
        <dbReference type="ChEBI" id="CHEBI:30616"/>
        <note>ligand shared between dimeric partners</note>
    </ligand>
</feature>
<feature type="binding site" description="in other chain" evidence="1">
    <location>
        <begin position="48"/>
        <end position="50"/>
    </location>
    <ligand>
        <name>ATP</name>
        <dbReference type="ChEBI" id="CHEBI:30616"/>
        <note>ligand shared between dimeric partners</note>
    </ligand>
</feature>
<feature type="binding site" evidence="1">
    <location>
        <position position="51"/>
    </location>
    <ligand>
        <name>Mg(2+)</name>
        <dbReference type="ChEBI" id="CHEBI:18420"/>
    </ligand>
</feature>
<feature type="binding site" description="in other chain" evidence="1">
    <location>
        <position position="68"/>
    </location>
    <ligand>
        <name>ATP</name>
        <dbReference type="ChEBI" id="CHEBI:30616"/>
        <note>ligand shared between dimeric partners</note>
    </ligand>
</feature>
<feature type="binding site" description="in other chain" evidence="1">
    <location>
        <position position="91"/>
    </location>
    <ligand>
        <name>ATP</name>
        <dbReference type="ChEBI" id="CHEBI:30616"/>
        <note>ligand shared between dimeric partners</note>
    </ligand>
</feature>
<feature type="binding site" evidence="1">
    <location>
        <position position="91"/>
    </location>
    <ligand>
        <name>Mg(2+)</name>
        <dbReference type="ChEBI" id="CHEBI:18420"/>
    </ligand>
</feature>
<feature type="binding site" evidence="1">
    <location>
        <begin position="139"/>
        <end position="141"/>
    </location>
    <ligand>
        <name>ATP</name>
        <dbReference type="ChEBI" id="CHEBI:30616"/>
        <note>ligand shared between dimeric partners</note>
    </ligand>
</feature>
<feature type="binding site" evidence="1">
    <location>
        <position position="227"/>
    </location>
    <ligand>
        <name>Mg(2+)</name>
        <dbReference type="ChEBI" id="CHEBI:18420"/>
    </ligand>
</feature>
<feature type="site" description="Important for catalytic activity" evidence="1">
    <location>
        <position position="20"/>
    </location>
</feature>
<dbReference type="EC" id="2.7.9.3" evidence="1"/>
<dbReference type="EMBL" id="CP000800">
    <property type="protein sequence ID" value="ABV19105.1"/>
    <property type="molecule type" value="Genomic_DNA"/>
</dbReference>
<dbReference type="RefSeq" id="WP_001297659.1">
    <property type="nucleotide sequence ID" value="NC_009801.1"/>
</dbReference>
<dbReference type="SMR" id="A7ZMN3"/>
<dbReference type="GeneID" id="75203070"/>
<dbReference type="KEGG" id="ecw:EcE24377A_1987"/>
<dbReference type="HOGENOM" id="CLU_032859_0_1_6"/>
<dbReference type="Proteomes" id="UP000001122">
    <property type="component" value="Chromosome"/>
</dbReference>
<dbReference type="GO" id="GO:0005737">
    <property type="term" value="C:cytoplasm"/>
    <property type="evidence" value="ECO:0007669"/>
    <property type="project" value="TreeGrafter"/>
</dbReference>
<dbReference type="GO" id="GO:0005524">
    <property type="term" value="F:ATP binding"/>
    <property type="evidence" value="ECO:0007669"/>
    <property type="project" value="UniProtKB-UniRule"/>
</dbReference>
<dbReference type="GO" id="GO:0000287">
    <property type="term" value="F:magnesium ion binding"/>
    <property type="evidence" value="ECO:0007669"/>
    <property type="project" value="UniProtKB-UniRule"/>
</dbReference>
<dbReference type="GO" id="GO:0004756">
    <property type="term" value="F:selenide, water dikinase activity"/>
    <property type="evidence" value="ECO:0007669"/>
    <property type="project" value="UniProtKB-UniRule"/>
</dbReference>
<dbReference type="GO" id="GO:0016260">
    <property type="term" value="P:selenocysteine biosynthetic process"/>
    <property type="evidence" value="ECO:0007669"/>
    <property type="project" value="InterPro"/>
</dbReference>
<dbReference type="CDD" id="cd02195">
    <property type="entry name" value="SelD"/>
    <property type="match status" value="1"/>
</dbReference>
<dbReference type="FunFam" id="3.30.1330.10:FF:000003">
    <property type="entry name" value="Selenide, water dikinase"/>
    <property type="match status" value="1"/>
</dbReference>
<dbReference type="FunFam" id="3.90.650.10:FF:000004">
    <property type="entry name" value="Selenide, water dikinase"/>
    <property type="match status" value="1"/>
</dbReference>
<dbReference type="Gene3D" id="3.90.650.10">
    <property type="entry name" value="PurM-like C-terminal domain"/>
    <property type="match status" value="1"/>
</dbReference>
<dbReference type="Gene3D" id="3.30.1330.10">
    <property type="entry name" value="PurM-like, N-terminal domain"/>
    <property type="match status" value="1"/>
</dbReference>
<dbReference type="HAMAP" id="MF_00625">
    <property type="entry name" value="SelD"/>
    <property type="match status" value="1"/>
</dbReference>
<dbReference type="InterPro" id="IPR010918">
    <property type="entry name" value="PurM-like_C_dom"/>
</dbReference>
<dbReference type="InterPro" id="IPR036676">
    <property type="entry name" value="PurM-like_C_sf"/>
</dbReference>
<dbReference type="InterPro" id="IPR016188">
    <property type="entry name" value="PurM-like_N"/>
</dbReference>
<dbReference type="InterPro" id="IPR036921">
    <property type="entry name" value="PurM-like_N_sf"/>
</dbReference>
<dbReference type="InterPro" id="IPR023061">
    <property type="entry name" value="SelD_I"/>
</dbReference>
<dbReference type="InterPro" id="IPR004536">
    <property type="entry name" value="SPS/SelD"/>
</dbReference>
<dbReference type="NCBIfam" id="NF002098">
    <property type="entry name" value="PRK00943.1"/>
    <property type="match status" value="1"/>
</dbReference>
<dbReference type="NCBIfam" id="TIGR00476">
    <property type="entry name" value="selD"/>
    <property type="match status" value="1"/>
</dbReference>
<dbReference type="PANTHER" id="PTHR10256:SF0">
    <property type="entry name" value="INACTIVE SELENIDE, WATER DIKINASE-LIKE PROTEIN-RELATED"/>
    <property type="match status" value="1"/>
</dbReference>
<dbReference type="PANTHER" id="PTHR10256">
    <property type="entry name" value="SELENIDE, WATER DIKINASE"/>
    <property type="match status" value="1"/>
</dbReference>
<dbReference type="Pfam" id="PF00586">
    <property type="entry name" value="AIRS"/>
    <property type="match status" value="1"/>
</dbReference>
<dbReference type="Pfam" id="PF02769">
    <property type="entry name" value="AIRS_C"/>
    <property type="match status" value="1"/>
</dbReference>
<dbReference type="PIRSF" id="PIRSF036407">
    <property type="entry name" value="Selenphspht_syn"/>
    <property type="match status" value="1"/>
</dbReference>
<dbReference type="SUPFAM" id="SSF56042">
    <property type="entry name" value="PurM C-terminal domain-like"/>
    <property type="match status" value="1"/>
</dbReference>
<dbReference type="SUPFAM" id="SSF55326">
    <property type="entry name" value="PurM N-terminal domain-like"/>
    <property type="match status" value="1"/>
</dbReference>
<comment type="function">
    <text evidence="1">Synthesizes selenophosphate from selenide and ATP.</text>
</comment>
<comment type="catalytic activity">
    <reaction evidence="1">
        <text>hydrogenselenide + ATP + H2O = selenophosphate + AMP + phosphate + 2 H(+)</text>
        <dbReference type="Rhea" id="RHEA:18737"/>
        <dbReference type="ChEBI" id="CHEBI:15377"/>
        <dbReference type="ChEBI" id="CHEBI:15378"/>
        <dbReference type="ChEBI" id="CHEBI:16144"/>
        <dbReference type="ChEBI" id="CHEBI:29317"/>
        <dbReference type="ChEBI" id="CHEBI:30616"/>
        <dbReference type="ChEBI" id="CHEBI:43474"/>
        <dbReference type="ChEBI" id="CHEBI:456215"/>
        <dbReference type="EC" id="2.7.9.3"/>
    </reaction>
</comment>
<comment type="cofactor">
    <cofactor evidence="1">
        <name>Mg(2+)</name>
        <dbReference type="ChEBI" id="CHEBI:18420"/>
    </cofactor>
    <text evidence="1">Binds 1 Mg(2+) ion per monomer.</text>
</comment>
<comment type="subunit">
    <text evidence="1">Homodimer.</text>
</comment>
<comment type="similarity">
    <text evidence="1">Belongs to the selenophosphate synthase 1 family. Class I subfamily.</text>
</comment>
<proteinExistence type="inferred from homology"/>
<reference key="1">
    <citation type="journal article" date="2008" name="J. Bacteriol.">
        <title>The pangenome structure of Escherichia coli: comparative genomic analysis of E. coli commensal and pathogenic isolates.</title>
        <authorList>
            <person name="Rasko D.A."/>
            <person name="Rosovitz M.J."/>
            <person name="Myers G.S.A."/>
            <person name="Mongodin E.F."/>
            <person name="Fricke W.F."/>
            <person name="Gajer P."/>
            <person name="Crabtree J."/>
            <person name="Sebaihia M."/>
            <person name="Thomson N.R."/>
            <person name="Chaudhuri R."/>
            <person name="Henderson I.R."/>
            <person name="Sperandio V."/>
            <person name="Ravel J."/>
        </authorList>
    </citation>
    <scope>NUCLEOTIDE SEQUENCE [LARGE SCALE GENOMIC DNA]</scope>
    <source>
        <strain>E24377A / ETEC</strain>
    </source>
</reference>
<organism>
    <name type="scientific">Escherichia coli O139:H28 (strain E24377A / ETEC)</name>
    <dbReference type="NCBI Taxonomy" id="331111"/>
    <lineage>
        <taxon>Bacteria</taxon>
        <taxon>Pseudomonadati</taxon>
        <taxon>Pseudomonadota</taxon>
        <taxon>Gammaproteobacteria</taxon>
        <taxon>Enterobacterales</taxon>
        <taxon>Enterobacteriaceae</taxon>
        <taxon>Escherichia</taxon>
    </lineage>
</organism>
<accession>A7ZMN3</accession>